<keyword id="KW-0025">Alternative splicing</keyword>
<keyword id="KW-0325">Glycoprotein</keyword>
<keyword id="KW-0472">Membrane</keyword>
<keyword id="KW-0597">Phosphoprotein</keyword>
<keyword id="KW-1185">Reference proteome</keyword>
<keyword id="KW-0812">Transmembrane</keyword>
<keyword id="KW-1133">Transmembrane helix</keyword>
<accession>Q8BJ51</accession>
<accession>A2AA30</accession>
<accession>A2AA32</accession>
<accession>B2RQK5</accession>
<accession>O54844</accession>
<accession>Q8BJ61</accession>
<evidence type="ECO:0000255" key="1"/>
<evidence type="ECO:0000269" key="2">
    <source>
    </source>
</evidence>
<evidence type="ECO:0000305" key="3"/>
<evidence type="ECO:0007744" key="4">
    <source>
    </source>
</evidence>
<reference key="1">
    <citation type="journal article" date="2005" name="Science">
        <title>The transcriptional landscape of the mammalian genome.</title>
        <authorList>
            <person name="Carninci P."/>
            <person name="Kasukawa T."/>
            <person name="Katayama S."/>
            <person name="Gough J."/>
            <person name="Frith M.C."/>
            <person name="Maeda N."/>
            <person name="Oyama R."/>
            <person name="Ravasi T."/>
            <person name="Lenhard B."/>
            <person name="Wells C."/>
            <person name="Kodzius R."/>
            <person name="Shimokawa K."/>
            <person name="Bajic V.B."/>
            <person name="Brenner S.E."/>
            <person name="Batalov S."/>
            <person name="Forrest A.R."/>
            <person name="Zavolan M."/>
            <person name="Davis M.J."/>
            <person name="Wilming L.G."/>
            <person name="Aidinis V."/>
            <person name="Allen J.E."/>
            <person name="Ambesi-Impiombato A."/>
            <person name="Apweiler R."/>
            <person name="Aturaliya R.N."/>
            <person name="Bailey T.L."/>
            <person name="Bansal M."/>
            <person name="Baxter L."/>
            <person name="Beisel K.W."/>
            <person name="Bersano T."/>
            <person name="Bono H."/>
            <person name="Chalk A.M."/>
            <person name="Chiu K.P."/>
            <person name="Choudhary V."/>
            <person name="Christoffels A."/>
            <person name="Clutterbuck D.R."/>
            <person name="Crowe M.L."/>
            <person name="Dalla E."/>
            <person name="Dalrymple B.P."/>
            <person name="de Bono B."/>
            <person name="Della Gatta G."/>
            <person name="di Bernardo D."/>
            <person name="Down T."/>
            <person name="Engstrom P."/>
            <person name="Fagiolini M."/>
            <person name="Faulkner G."/>
            <person name="Fletcher C.F."/>
            <person name="Fukushima T."/>
            <person name="Furuno M."/>
            <person name="Futaki S."/>
            <person name="Gariboldi M."/>
            <person name="Georgii-Hemming P."/>
            <person name="Gingeras T.R."/>
            <person name="Gojobori T."/>
            <person name="Green R.E."/>
            <person name="Gustincich S."/>
            <person name="Harbers M."/>
            <person name="Hayashi Y."/>
            <person name="Hensch T.K."/>
            <person name="Hirokawa N."/>
            <person name="Hill D."/>
            <person name="Huminiecki L."/>
            <person name="Iacono M."/>
            <person name="Ikeo K."/>
            <person name="Iwama A."/>
            <person name="Ishikawa T."/>
            <person name="Jakt M."/>
            <person name="Kanapin A."/>
            <person name="Katoh M."/>
            <person name="Kawasawa Y."/>
            <person name="Kelso J."/>
            <person name="Kitamura H."/>
            <person name="Kitano H."/>
            <person name="Kollias G."/>
            <person name="Krishnan S.P."/>
            <person name="Kruger A."/>
            <person name="Kummerfeld S.K."/>
            <person name="Kurochkin I.V."/>
            <person name="Lareau L.F."/>
            <person name="Lazarevic D."/>
            <person name="Lipovich L."/>
            <person name="Liu J."/>
            <person name="Liuni S."/>
            <person name="McWilliam S."/>
            <person name="Madan Babu M."/>
            <person name="Madera M."/>
            <person name="Marchionni L."/>
            <person name="Matsuda H."/>
            <person name="Matsuzawa S."/>
            <person name="Miki H."/>
            <person name="Mignone F."/>
            <person name="Miyake S."/>
            <person name="Morris K."/>
            <person name="Mottagui-Tabar S."/>
            <person name="Mulder N."/>
            <person name="Nakano N."/>
            <person name="Nakauchi H."/>
            <person name="Ng P."/>
            <person name="Nilsson R."/>
            <person name="Nishiguchi S."/>
            <person name="Nishikawa S."/>
            <person name="Nori F."/>
            <person name="Ohara O."/>
            <person name="Okazaki Y."/>
            <person name="Orlando V."/>
            <person name="Pang K.C."/>
            <person name="Pavan W.J."/>
            <person name="Pavesi G."/>
            <person name="Pesole G."/>
            <person name="Petrovsky N."/>
            <person name="Piazza S."/>
            <person name="Reed J."/>
            <person name="Reid J.F."/>
            <person name="Ring B.Z."/>
            <person name="Ringwald M."/>
            <person name="Rost B."/>
            <person name="Ruan Y."/>
            <person name="Salzberg S.L."/>
            <person name="Sandelin A."/>
            <person name="Schneider C."/>
            <person name="Schoenbach C."/>
            <person name="Sekiguchi K."/>
            <person name="Semple C.A."/>
            <person name="Seno S."/>
            <person name="Sessa L."/>
            <person name="Sheng Y."/>
            <person name="Shibata Y."/>
            <person name="Shimada H."/>
            <person name="Shimada K."/>
            <person name="Silva D."/>
            <person name="Sinclair B."/>
            <person name="Sperling S."/>
            <person name="Stupka E."/>
            <person name="Sugiura K."/>
            <person name="Sultana R."/>
            <person name="Takenaka Y."/>
            <person name="Taki K."/>
            <person name="Tammoja K."/>
            <person name="Tan S.L."/>
            <person name="Tang S."/>
            <person name="Taylor M.S."/>
            <person name="Tegner J."/>
            <person name="Teichmann S.A."/>
            <person name="Ueda H.R."/>
            <person name="van Nimwegen E."/>
            <person name="Verardo R."/>
            <person name="Wei C.L."/>
            <person name="Yagi K."/>
            <person name="Yamanishi H."/>
            <person name="Zabarovsky E."/>
            <person name="Zhu S."/>
            <person name="Zimmer A."/>
            <person name="Hide W."/>
            <person name="Bult C."/>
            <person name="Grimmond S.M."/>
            <person name="Teasdale R.D."/>
            <person name="Liu E.T."/>
            <person name="Brusic V."/>
            <person name="Quackenbush J."/>
            <person name="Wahlestedt C."/>
            <person name="Mattick J.S."/>
            <person name="Hume D.A."/>
            <person name="Kai C."/>
            <person name="Sasaki D."/>
            <person name="Tomaru Y."/>
            <person name="Fukuda S."/>
            <person name="Kanamori-Katayama M."/>
            <person name="Suzuki M."/>
            <person name="Aoki J."/>
            <person name="Arakawa T."/>
            <person name="Iida J."/>
            <person name="Imamura K."/>
            <person name="Itoh M."/>
            <person name="Kato T."/>
            <person name="Kawaji H."/>
            <person name="Kawagashira N."/>
            <person name="Kawashima T."/>
            <person name="Kojima M."/>
            <person name="Kondo S."/>
            <person name="Konno H."/>
            <person name="Nakano K."/>
            <person name="Ninomiya N."/>
            <person name="Nishio T."/>
            <person name="Okada M."/>
            <person name="Plessy C."/>
            <person name="Shibata K."/>
            <person name="Shiraki T."/>
            <person name="Suzuki S."/>
            <person name="Tagami M."/>
            <person name="Waki K."/>
            <person name="Watahiki A."/>
            <person name="Okamura-Oho Y."/>
            <person name="Suzuki H."/>
            <person name="Kawai J."/>
            <person name="Hayashizaki Y."/>
        </authorList>
    </citation>
    <scope>NUCLEOTIDE SEQUENCE [LARGE SCALE MRNA] (ISOFORM 1)</scope>
    <source>
        <strain>C57BL/6J</strain>
        <tissue>Medulla oblongata</tissue>
        <tissue>Testis</tissue>
    </source>
</reference>
<reference key="2">
    <citation type="journal article" date="2009" name="PLoS Biol.">
        <title>Lineage-specific biology revealed by a finished genome assembly of the mouse.</title>
        <authorList>
            <person name="Church D.M."/>
            <person name="Goodstadt L."/>
            <person name="Hillier L.W."/>
            <person name="Zody M.C."/>
            <person name="Goldstein S."/>
            <person name="She X."/>
            <person name="Bult C.J."/>
            <person name="Agarwala R."/>
            <person name="Cherry J.L."/>
            <person name="DiCuccio M."/>
            <person name="Hlavina W."/>
            <person name="Kapustin Y."/>
            <person name="Meric P."/>
            <person name="Maglott D."/>
            <person name="Birtle Z."/>
            <person name="Marques A.C."/>
            <person name="Graves T."/>
            <person name="Zhou S."/>
            <person name="Teague B."/>
            <person name="Potamousis K."/>
            <person name="Churas C."/>
            <person name="Place M."/>
            <person name="Herschleb J."/>
            <person name="Runnheim R."/>
            <person name="Forrest D."/>
            <person name="Amos-Landgraf J."/>
            <person name="Schwartz D.C."/>
            <person name="Cheng Z."/>
            <person name="Lindblad-Toh K."/>
            <person name="Eichler E.E."/>
            <person name="Ponting C.P."/>
        </authorList>
    </citation>
    <scope>NUCLEOTIDE SEQUENCE [LARGE SCALE GENOMIC DNA]</scope>
    <source>
        <strain>C57BL/6J</strain>
    </source>
</reference>
<reference key="3">
    <citation type="journal article" date="2004" name="Genome Res.">
        <title>The status, quality, and expansion of the NIH full-length cDNA project: the Mammalian Gene Collection (MGC).</title>
        <authorList>
            <consortium name="The MGC Project Team"/>
        </authorList>
    </citation>
    <scope>NUCLEOTIDE SEQUENCE [LARGE SCALE MRNA] (ISOFORM 1)</scope>
    <source>
        <strain>C57BL/6J</strain>
        <tissue>Brain</tissue>
    </source>
</reference>
<reference key="4">
    <citation type="journal article" date="1997" name="Nucleic Acids Res.">
        <title>Characterization of multiple alternative RNAs resulting from antisense transcription of the PR264/SC35 splicing factor gene.</title>
        <authorList>
            <person name="Sureau A."/>
            <person name="Soret J."/>
            <person name="Guyon C."/>
            <person name="Gaillard C."/>
            <person name="Dumon S."/>
            <person name="Keller M."/>
            <person name="Crisanti P."/>
            <person name="Perbal B."/>
        </authorList>
    </citation>
    <scope>NUCLEOTIDE SEQUENCE [MRNA] OF 1-434 (ISOFORM 1)</scope>
    <scope>TISSUE SPECIFICITY</scope>
</reference>
<reference key="5">
    <citation type="journal article" date="2009" name="Immunity">
        <title>The phagosomal proteome in interferon-gamma-activated macrophages.</title>
        <authorList>
            <person name="Trost M."/>
            <person name="English L."/>
            <person name="Lemieux S."/>
            <person name="Courcelles M."/>
            <person name="Desjardins M."/>
            <person name="Thibault P."/>
        </authorList>
    </citation>
    <scope>PHOSPHORYLATION [LARGE SCALE ANALYSIS] AT SER-204</scope>
    <scope>IDENTIFICATION BY MASS SPECTROMETRY [LARGE SCALE ANALYSIS]</scope>
</reference>
<feature type="chain" id="PRO_0000305021" description="UNC93-like protein MFSD11">
    <location>
        <begin position="1"/>
        <end position="449"/>
    </location>
</feature>
<feature type="transmembrane region" description="Helical" evidence="1">
    <location>
        <begin position="8"/>
        <end position="28"/>
    </location>
</feature>
<feature type="transmembrane region" description="Helical" evidence="1">
    <location>
        <begin position="53"/>
        <end position="73"/>
    </location>
</feature>
<feature type="transmembrane region" description="Helical" evidence="1">
    <location>
        <begin position="74"/>
        <end position="94"/>
    </location>
</feature>
<feature type="transmembrane region" description="Helical" evidence="1">
    <location>
        <begin position="96"/>
        <end position="116"/>
    </location>
</feature>
<feature type="transmembrane region" description="Helical" evidence="1">
    <location>
        <begin position="138"/>
        <end position="158"/>
    </location>
</feature>
<feature type="transmembrane region" description="Helical" evidence="1">
    <location>
        <begin position="170"/>
        <end position="190"/>
    </location>
</feature>
<feature type="transmembrane region" description="Helical" evidence="1">
    <location>
        <begin position="239"/>
        <end position="259"/>
    </location>
</feature>
<feature type="transmembrane region" description="Helical" evidence="1">
    <location>
        <begin position="277"/>
        <end position="297"/>
    </location>
</feature>
<feature type="transmembrane region" description="Helical" evidence="1">
    <location>
        <begin position="309"/>
        <end position="329"/>
    </location>
</feature>
<feature type="transmembrane region" description="Helical" evidence="1">
    <location>
        <begin position="359"/>
        <end position="379"/>
    </location>
</feature>
<feature type="transmembrane region" description="Helical" evidence="1">
    <location>
        <begin position="385"/>
        <end position="405"/>
    </location>
</feature>
<feature type="transmembrane region" description="Helical" evidence="1">
    <location>
        <begin position="410"/>
        <end position="430"/>
    </location>
</feature>
<feature type="modified residue" description="Phosphoserine" evidence="4">
    <location>
        <position position="204"/>
    </location>
</feature>
<feature type="glycosylation site" description="N-linked (GlcNAc...) asparagine" evidence="1">
    <location>
        <position position="40"/>
    </location>
</feature>
<feature type="splice variant" id="VSP_028189" description="In isoform 2." evidence="3">
    <location>
        <begin position="114"/>
        <end position="165"/>
    </location>
</feature>
<feature type="sequence conflict" description="In Ref. 4; AAB92498." evidence="3" ref="4">
    <original>G</original>
    <variation>S</variation>
    <location>
        <position position="46"/>
    </location>
</feature>
<feature type="sequence conflict" description="In Ref. 4; AAB92498." evidence="3" ref="4">
    <original>S</original>
    <variation>P</variation>
    <location>
        <position position="78"/>
    </location>
</feature>
<feature type="sequence conflict" description="In Ref. 4; AAB92498." evidence="3" ref="4">
    <original>I</original>
    <variation>T</variation>
    <location>
        <position position="125"/>
    </location>
</feature>
<feature type="sequence conflict" description="In Ref. 4; AAB92498." evidence="3" ref="4">
    <original>A</original>
    <variation>V</variation>
    <location>
        <position position="247"/>
    </location>
</feature>
<feature type="sequence conflict" description="In Ref. 1; BAC27376." evidence="3" ref="1">
    <original>A</original>
    <variation>D</variation>
    <location>
        <position position="336"/>
    </location>
</feature>
<feature type="sequence conflict" description="In Ref. 4; AAB92498." evidence="3" ref="4">
    <original>A</original>
    <variation>T</variation>
    <location>
        <position position="431"/>
    </location>
</feature>
<dbReference type="EMBL" id="AK031384">
    <property type="protein sequence ID" value="BAC27376.1"/>
    <property type="molecule type" value="mRNA"/>
</dbReference>
<dbReference type="EMBL" id="AK032043">
    <property type="protein sequence ID" value="BAC27666.1"/>
    <property type="molecule type" value="mRNA"/>
</dbReference>
<dbReference type="EMBL" id="AL645542">
    <property type="status" value="NOT_ANNOTATED_CDS"/>
    <property type="molecule type" value="Genomic_DNA"/>
</dbReference>
<dbReference type="EMBL" id="BC088988">
    <property type="protein sequence ID" value="AAH88988.1"/>
    <property type="molecule type" value="mRNA"/>
</dbReference>
<dbReference type="EMBL" id="BC137970">
    <property type="protein sequence ID" value="AAI37971.1"/>
    <property type="molecule type" value="mRNA"/>
</dbReference>
<dbReference type="EMBL" id="BC137971">
    <property type="protein sequence ID" value="AAI37972.1"/>
    <property type="molecule type" value="mRNA"/>
</dbReference>
<dbReference type="EMBL" id="AF015191">
    <property type="protein sequence ID" value="AAB92498.1"/>
    <property type="molecule type" value="mRNA"/>
</dbReference>
<dbReference type="CCDS" id="CCDS25681.1">
    <molecule id="Q8BJ51-1"/>
</dbReference>
<dbReference type="RefSeq" id="NP_848735.1">
    <molecule id="Q8BJ51-1"/>
    <property type="nucleotide sequence ID" value="NM_178620.4"/>
</dbReference>
<dbReference type="RefSeq" id="XP_006534205.1">
    <molecule id="Q8BJ51-1"/>
    <property type="nucleotide sequence ID" value="XM_006534142.4"/>
</dbReference>
<dbReference type="RefSeq" id="XP_006534206.1">
    <molecule id="Q8BJ51-1"/>
    <property type="nucleotide sequence ID" value="XM_006534143.5"/>
</dbReference>
<dbReference type="RefSeq" id="XP_006534207.1">
    <molecule id="Q8BJ51-1"/>
    <property type="nucleotide sequence ID" value="XM_006534144.5"/>
</dbReference>
<dbReference type="RefSeq" id="XP_017170234.1">
    <molecule id="Q8BJ51-1"/>
    <property type="nucleotide sequence ID" value="XM_017314745.2"/>
</dbReference>
<dbReference type="RefSeq" id="XP_036012864.1">
    <molecule id="Q8BJ51-1"/>
    <property type="nucleotide sequence ID" value="XM_036156971.1"/>
</dbReference>
<dbReference type="SMR" id="Q8BJ51"/>
<dbReference type="FunCoup" id="Q8BJ51">
    <property type="interactions" value="44"/>
</dbReference>
<dbReference type="STRING" id="10090.ENSMUSP00000021173"/>
<dbReference type="TCDB" id="2.A.1.58.3">
    <property type="family name" value="the major facilitator superfamily (mfs)"/>
</dbReference>
<dbReference type="GlyCosmos" id="Q8BJ51">
    <property type="glycosylation" value="1 site, No reported glycans"/>
</dbReference>
<dbReference type="GlyGen" id="Q8BJ51">
    <property type="glycosylation" value="1 site"/>
</dbReference>
<dbReference type="iPTMnet" id="Q8BJ51"/>
<dbReference type="PhosphoSitePlus" id="Q8BJ51"/>
<dbReference type="PaxDb" id="10090-ENSMUSP00000021173"/>
<dbReference type="PeptideAtlas" id="Q8BJ51"/>
<dbReference type="ProteomicsDB" id="295601">
    <molecule id="Q8BJ51-1"/>
</dbReference>
<dbReference type="ProteomicsDB" id="295602">
    <molecule id="Q8BJ51-2"/>
</dbReference>
<dbReference type="Antibodypedia" id="19710">
    <property type="antibodies" value="45 antibodies from 12 providers"/>
</dbReference>
<dbReference type="DNASU" id="69900"/>
<dbReference type="Ensembl" id="ENSMUST00000021173.14">
    <molecule id="Q8BJ51-1"/>
    <property type="protein sequence ID" value="ENSMUSP00000021173.8"/>
    <property type="gene ID" value="ENSMUSG00000020818.17"/>
</dbReference>
<dbReference type="Ensembl" id="ENSMUST00000153084.3">
    <molecule id="Q8BJ51-2"/>
    <property type="protein sequence ID" value="ENSMUSP00000123368.3"/>
    <property type="gene ID" value="ENSMUSG00000020818.17"/>
</dbReference>
<dbReference type="GeneID" id="69900"/>
<dbReference type="KEGG" id="mmu:69900"/>
<dbReference type="UCSC" id="uc007mmp.1">
    <molecule id="Q8BJ51-1"/>
    <property type="organism name" value="mouse"/>
</dbReference>
<dbReference type="AGR" id="MGI:1917150"/>
<dbReference type="CTD" id="79157"/>
<dbReference type="MGI" id="MGI:1917150">
    <property type="gene designation" value="Mfsd11"/>
</dbReference>
<dbReference type="VEuPathDB" id="HostDB:ENSMUSG00000020818"/>
<dbReference type="eggNOG" id="KOG3098">
    <property type="taxonomic scope" value="Eukaryota"/>
</dbReference>
<dbReference type="GeneTree" id="ENSGT00390000012918"/>
<dbReference type="HOGENOM" id="CLU_025356_2_0_1"/>
<dbReference type="InParanoid" id="Q8BJ51"/>
<dbReference type="OMA" id="QFQDKTH"/>
<dbReference type="OrthoDB" id="196103at2759"/>
<dbReference type="PhylomeDB" id="Q8BJ51"/>
<dbReference type="TreeFam" id="TF315284"/>
<dbReference type="BioGRID-ORCS" id="69900">
    <property type="hits" value="3 hits in 78 CRISPR screens"/>
</dbReference>
<dbReference type="ChiTaRS" id="Mfsd11">
    <property type="organism name" value="mouse"/>
</dbReference>
<dbReference type="PRO" id="PR:Q8BJ51"/>
<dbReference type="Proteomes" id="UP000000589">
    <property type="component" value="Chromosome 11"/>
</dbReference>
<dbReference type="RNAct" id="Q8BJ51">
    <property type="molecule type" value="protein"/>
</dbReference>
<dbReference type="Bgee" id="ENSMUSG00000020818">
    <property type="expression patterns" value="Expressed in spermatocyte and 229 other cell types or tissues"/>
</dbReference>
<dbReference type="ExpressionAtlas" id="Q8BJ51">
    <property type="expression patterns" value="baseline and differential"/>
</dbReference>
<dbReference type="GO" id="GO:0016020">
    <property type="term" value="C:membrane"/>
    <property type="evidence" value="ECO:0007669"/>
    <property type="project" value="UniProtKB-SubCell"/>
</dbReference>
<dbReference type="GO" id="GO:0032094">
    <property type="term" value="P:response to food"/>
    <property type="evidence" value="ECO:0000315"/>
    <property type="project" value="MGI"/>
</dbReference>
<dbReference type="GO" id="GO:0042594">
    <property type="term" value="P:response to starvation"/>
    <property type="evidence" value="ECO:0000315"/>
    <property type="project" value="MGI"/>
</dbReference>
<dbReference type="CDD" id="cd17407">
    <property type="entry name" value="MFS_MFSD11"/>
    <property type="match status" value="1"/>
</dbReference>
<dbReference type="Gene3D" id="1.20.1250.20">
    <property type="entry name" value="MFS general substrate transporter like domains"/>
    <property type="match status" value="2"/>
</dbReference>
<dbReference type="InterPro" id="IPR010291">
    <property type="entry name" value="Ion_channel_UNC-93"/>
</dbReference>
<dbReference type="InterPro" id="IPR036259">
    <property type="entry name" value="MFS_trans_sf"/>
</dbReference>
<dbReference type="InterPro" id="IPR051617">
    <property type="entry name" value="UNC-93-like_regulator"/>
</dbReference>
<dbReference type="PANTHER" id="PTHR23294">
    <property type="entry name" value="ET TRANSLATION PRODUCT-RELATED"/>
    <property type="match status" value="1"/>
</dbReference>
<dbReference type="PANTHER" id="PTHR23294:SF0">
    <property type="entry name" value="UNC93-LIKE PROTEIN MFSD11"/>
    <property type="match status" value="1"/>
</dbReference>
<dbReference type="Pfam" id="PF05978">
    <property type="entry name" value="UNC-93"/>
    <property type="match status" value="1"/>
</dbReference>
<dbReference type="SUPFAM" id="SSF103473">
    <property type="entry name" value="MFS general substrate transporter"/>
    <property type="match status" value="1"/>
</dbReference>
<name>MFS11_MOUSE</name>
<protein>
    <recommendedName>
        <fullName>UNC93-like protein MFSD11</fullName>
    </recommendedName>
    <alternativeName>
        <fullName>Major facilitator superfamily domain-containing protein 11</fullName>
    </alternativeName>
    <alternativeName>
        <fullName>Protein ET</fullName>
    </alternativeName>
</protein>
<gene>
    <name type="primary">Mfsd11</name>
    <name type="synonym">Et</name>
</gene>
<comment type="subcellular location">
    <subcellularLocation>
        <location evidence="3">Membrane</location>
        <topology evidence="3">Multi-pass membrane protein</topology>
    </subcellularLocation>
</comment>
<comment type="alternative products">
    <event type="alternative splicing"/>
    <isoform>
        <id>Q8BJ51-1</id>
        <name>1</name>
        <sequence type="displayed"/>
    </isoform>
    <isoform>
        <id>Q8BJ51-2</id>
        <name>2</name>
        <sequence type="described" ref="VSP_028189"/>
    </isoform>
</comment>
<comment type="tissue specificity">
    <text evidence="2">Widely expressed.</text>
</comment>
<comment type="similarity">
    <text evidence="3">Belongs to the unc-93 family.</text>
</comment>
<comment type="caution">
    <text evidence="3">Despite its name it is related to the unc-93 family and not to the major facilitator superfamily.</text>
</comment>
<proteinExistence type="evidence at protein level"/>
<organism>
    <name type="scientific">Mus musculus</name>
    <name type="common">Mouse</name>
    <dbReference type="NCBI Taxonomy" id="10090"/>
    <lineage>
        <taxon>Eukaryota</taxon>
        <taxon>Metazoa</taxon>
        <taxon>Chordata</taxon>
        <taxon>Craniata</taxon>
        <taxon>Vertebrata</taxon>
        <taxon>Euteleostomi</taxon>
        <taxon>Mammalia</taxon>
        <taxon>Eutheria</taxon>
        <taxon>Euarchontoglires</taxon>
        <taxon>Glires</taxon>
        <taxon>Rodentia</taxon>
        <taxon>Myomorpha</taxon>
        <taxon>Muroidea</taxon>
        <taxon>Muridae</taxon>
        <taxon>Murinae</taxon>
        <taxon>Mus</taxon>
        <taxon>Mus</taxon>
    </lineage>
</organism>
<sequence length="449" mass="49133">MSPESKKLFNIVILGVAFMFMFTAFQTCGNVAQTVIRSLNSTDFHGSGYTSLAIIYGVFSASNLITPSVVAIVGPQISMFVSGLFYSMYIAVFIQPFPWSFYTASVFIGIAAAVLWTAQGNCLTINSDEHTIGRNSGIFWALLQSSLFFGNLYIYFAWQGKTQISEHDRRTVFIALTVISLVGTVLFFLIRKPDPENVLGEEESCDDQDMEATESAQNNVTKAVDAFKKSLRLCVTREMLLLSVTTAYTGLELTFFSGVYGTCIGAVNKFGTEEKSLIGLSGIFIGIGEILGGSLFGLLSKNSRFGRNPVVLLGTLVHFVAFYLIFLNMPGDAPIAPVEGTNSIAYIRPSKEVAILCSFLLGLGDSCFNTQLLSILGFLYSEDSAPAFAVFKFVQSICAAVAFFYSNYLLLHWQLLVMVIFGFFGTISFFAVEWDAAAIVARGSDYRSI</sequence>